<protein>
    <recommendedName>
        <fullName evidence="1">Large ribosomal subunit protein bL20</fullName>
    </recommendedName>
    <alternativeName>
        <fullName evidence="2">50S ribosomal protein L20</fullName>
    </alternativeName>
</protein>
<sequence length="118" mass="13999">MARVKTGVVRRRRHKKVLKLARGFFSARHKHFRKAKEQLERSLVYAYRDRRQKKRDFRRLWIVRINAACRLNDLSYSRFMNGLKKANIELDRKILADLAMNDAKAFAALAKQAKDALK</sequence>
<reference key="1">
    <citation type="submission" date="2007-07" db="EMBL/GenBank/DDBJ databases">
        <title>Genome sequence of Campylobacter curvus 525.92 isolated from human feces.</title>
        <authorList>
            <person name="Fouts D.E."/>
            <person name="Mongodin E.F."/>
            <person name="Puiu D."/>
            <person name="Sebastian Y."/>
            <person name="Miller W.G."/>
            <person name="Mandrell R.E."/>
            <person name="Lastovica A.J."/>
            <person name="Nelson K.E."/>
        </authorList>
    </citation>
    <scope>NUCLEOTIDE SEQUENCE [LARGE SCALE GENOMIC DNA]</scope>
    <source>
        <strain>525.92</strain>
    </source>
</reference>
<dbReference type="EMBL" id="CP000767">
    <property type="protein sequence ID" value="EAT99704.1"/>
    <property type="molecule type" value="Genomic_DNA"/>
</dbReference>
<dbReference type="RefSeq" id="WP_009649469.1">
    <property type="nucleotide sequence ID" value="NC_009715.2"/>
</dbReference>
<dbReference type="SMR" id="A7GVX8"/>
<dbReference type="STRING" id="360105.CCV52592_0347"/>
<dbReference type="GeneID" id="61001355"/>
<dbReference type="KEGG" id="ccv:CCV52592_0347"/>
<dbReference type="HOGENOM" id="CLU_123265_0_1_7"/>
<dbReference type="OrthoDB" id="9808966at2"/>
<dbReference type="Proteomes" id="UP000006380">
    <property type="component" value="Chromosome"/>
</dbReference>
<dbReference type="GO" id="GO:1990904">
    <property type="term" value="C:ribonucleoprotein complex"/>
    <property type="evidence" value="ECO:0007669"/>
    <property type="project" value="UniProtKB-KW"/>
</dbReference>
<dbReference type="GO" id="GO:0005840">
    <property type="term" value="C:ribosome"/>
    <property type="evidence" value="ECO:0007669"/>
    <property type="project" value="UniProtKB-KW"/>
</dbReference>
<dbReference type="GO" id="GO:0019843">
    <property type="term" value="F:rRNA binding"/>
    <property type="evidence" value="ECO:0007669"/>
    <property type="project" value="UniProtKB-UniRule"/>
</dbReference>
<dbReference type="GO" id="GO:0003735">
    <property type="term" value="F:structural constituent of ribosome"/>
    <property type="evidence" value="ECO:0007669"/>
    <property type="project" value="InterPro"/>
</dbReference>
<dbReference type="GO" id="GO:0000027">
    <property type="term" value="P:ribosomal large subunit assembly"/>
    <property type="evidence" value="ECO:0007669"/>
    <property type="project" value="UniProtKB-UniRule"/>
</dbReference>
<dbReference type="GO" id="GO:0006412">
    <property type="term" value="P:translation"/>
    <property type="evidence" value="ECO:0007669"/>
    <property type="project" value="InterPro"/>
</dbReference>
<dbReference type="CDD" id="cd07026">
    <property type="entry name" value="Ribosomal_L20"/>
    <property type="match status" value="1"/>
</dbReference>
<dbReference type="FunFam" id="1.10.1900.20:FF:000001">
    <property type="entry name" value="50S ribosomal protein L20"/>
    <property type="match status" value="1"/>
</dbReference>
<dbReference type="Gene3D" id="6.10.160.10">
    <property type="match status" value="1"/>
</dbReference>
<dbReference type="Gene3D" id="1.10.1900.20">
    <property type="entry name" value="Ribosomal protein L20"/>
    <property type="match status" value="1"/>
</dbReference>
<dbReference type="HAMAP" id="MF_00382">
    <property type="entry name" value="Ribosomal_bL20"/>
    <property type="match status" value="1"/>
</dbReference>
<dbReference type="InterPro" id="IPR005813">
    <property type="entry name" value="Ribosomal_bL20"/>
</dbReference>
<dbReference type="InterPro" id="IPR049946">
    <property type="entry name" value="RIBOSOMAL_L20_CS"/>
</dbReference>
<dbReference type="InterPro" id="IPR035566">
    <property type="entry name" value="Ribosomal_protein_bL20_C"/>
</dbReference>
<dbReference type="NCBIfam" id="TIGR01032">
    <property type="entry name" value="rplT_bact"/>
    <property type="match status" value="1"/>
</dbReference>
<dbReference type="PANTHER" id="PTHR10986">
    <property type="entry name" value="39S RIBOSOMAL PROTEIN L20"/>
    <property type="match status" value="1"/>
</dbReference>
<dbReference type="Pfam" id="PF00453">
    <property type="entry name" value="Ribosomal_L20"/>
    <property type="match status" value="1"/>
</dbReference>
<dbReference type="PRINTS" id="PR00062">
    <property type="entry name" value="RIBOSOMALL20"/>
</dbReference>
<dbReference type="SUPFAM" id="SSF74731">
    <property type="entry name" value="Ribosomal protein L20"/>
    <property type="match status" value="1"/>
</dbReference>
<dbReference type="PROSITE" id="PS00937">
    <property type="entry name" value="RIBOSOMAL_L20"/>
    <property type="match status" value="1"/>
</dbReference>
<evidence type="ECO:0000255" key="1">
    <source>
        <dbReference type="HAMAP-Rule" id="MF_00382"/>
    </source>
</evidence>
<evidence type="ECO:0000305" key="2"/>
<feature type="chain" id="PRO_1000048948" description="Large ribosomal subunit protein bL20">
    <location>
        <begin position="1"/>
        <end position="118"/>
    </location>
</feature>
<proteinExistence type="inferred from homology"/>
<organism>
    <name type="scientific">Campylobacter curvus (strain 525.92)</name>
    <dbReference type="NCBI Taxonomy" id="360105"/>
    <lineage>
        <taxon>Bacteria</taxon>
        <taxon>Pseudomonadati</taxon>
        <taxon>Campylobacterota</taxon>
        <taxon>Epsilonproteobacteria</taxon>
        <taxon>Campylobacterales</taxon>
        <taxon>Campylobacteraceae</taxon>
        <taxon>Campylobacter</taxon>
    </lineage>
</organism>
<comment type="function">
    <text evidence="1">Binds directly to 23S ribosomal RNA and is necessary for the in vitro assembly process of the 50S ribosomal subunit. It is not involved in the protein synthesizing functions of that subunit.</text>
</comment>
<comment type="similarity">
    <text evidence="1">Belongs to the bacterial ribosomal protein bL20 family.</text>
</comment>
<keyword id="KW-1185">Reference proteome</keyword>
<keyword id="KW-0687">Ribonucleoprotein</keyword>
<keyword id="KW-0689">Ribosomal protein</keyword>
<keyword id="KW-0694">RNA-binding</keyword>
<keyword id="KW-0699">rRNA-binding</keyword>
<gene>
    <name evidence="1" type="primary">rplT</name>
    <name type="ordered locus">Ccur92_00660</name>
    <name type="ORF">CCV52592_0347</name>
</gene>
<accession>A7GVX8</accession>
<name>RL20_CAMC5</name>